<reference key="1">
    <citation type="journal article" date="2002" name="Nucleic Acids Res.">
        <title>Genome sequence of Shigella flexneri 2a: insights into pathogenicity through comparison with genomes of Escherichia coli K12 and O157.</title>
        <authorList>
            <person name="Jin Q."/>
            <person name="Yuan Z."/>
            <person name="Xu J."/>
            <person name="Wang Y."/>
            <person name="Shen Y."/>
            <person name="Lu W."/>
            <person name="Wang J."/>
            <person name="Liu H."/>
            <person name="Yang J."/>
            <person name="Yang F."/>
            <person name="Zhang X."/>
            <person name="Zhang J."/>
            <person name="Yang G."/>
            <person name="Wu H."/>
            <person name="Qu D."/>
            <person name="Dong J."/>
            <person name="Sun L."/>
            <person name="Xue Y."/>
            <person name="Zhao A."/>
            <person name="Gao Y."/>
            <person name="Zhu J."/>
            <person name="Kan B."/>
            <person name="Ding K."/>
            <person name="Chen S."/>
            <person name="Cheng H."/>
            <person name="Yao Z."/>
            <person name="He B."/>
            <person name="Chen R."/>
            <person name="Ma D."/>
            <person name="Qiang B."/>
            <person name="Wen Y."/>
            <person name="Hou Y."/>
            <person name="Yu J."/>
        </authorList>
    </citation>
    <scope>NUCLEOTIDE SEQUENCE [LARGE SCALE GENOMIC DNA]</scope>
    <source>
        <strain>301 / Serotype 2a</strain>
    </source>
</reference>
<reference key="2">
    <citation type="journal article" date="2003" name="Infect. Immun.">
        <title>Complete genome sequence and comparative genomics of Shigella flexneri serotype 2a strain 2457T.</title>
        <authorList>
            <person name="Wei J."/>
            <person name="Goldberg M.B."/>
            <person name="Burland V."/>
            <person name="Venkatesan M.M."/>
            <person name="Deng W."/>
            <person name="Fournier G."/>
            <person name="Mayhew G.F."/>
            <person name="Plunkett G. III"/>
            <person name="Rose D.J."/>
            <person name="Darling A."/>
            <person name="Mau B."/>
            <person name="Perna N.T."/>
            <person name="Payne S.M."/>
            <person name="Runyen-Janecky L.J."/>
            <person name="Zhou S."/>
            <person name="Schwartz D.C."/>
            <person name="Blattner F.R."/>
        </authorList>
    </citation>
    <scope>NUCLEOTIDE SEQUENCE [LARGE SCALE GENOMIC DNA]</scope>
    <source>
        <strain>ATCC 700930 / 2457T / Serotype 2a</strain>
    </source>
</reference>
<reference key="3">
    <citation type="journal article" date="1992" name="J. Bacteriol.">
        <title>vacB, a novel chromosomal gene required for expression of virulence genes on the large plasmid of Shigella flexneri.</title>
        <authorList>
            <person name="Tobe T."/>
            <person name="Sasakawa C."/>
            <person name="Okada N."/>
            <person name="Honma Y."/>
            <person name="Yoshikawa M."/>
        </authorList>
    </citation>
    <scope>NUCLEOTIDE SEQUENCE [GENOMIC DNA] OF 1-770</scope>
    <source>
        <strain>YSH6000 / Serotype 2a</strain>
    </source>
</reference>
<reference key="4">
    <citation type="journal article" date="1998" name="J. Biol. Chem.">
        <title>The vacB gene required for virulence in Shigella flexneri and Escherichia coli encodes the exoribonuclease RNase R.</title>
        <authorList>
            <person name="Cheng Z.-F."/>
            <person name="Zuo Y."/>
            <person name="Li Z."/>
            <person name="Rudd K.E."/>
            <person name="Deutscher M.P."/>
        </authorList>
    </citation>
    <scope>SEQUENCE REVISION</scope>
</reference>
<sequence>MSQDPFQEREAEKYANPIPSREFILEHLTKREKPASRDELAVELHIEGEEQLEGLRRRLRAMERDGQLVFTRRQCYALPERLDLVKGTVIGHRDGYGFLRVEGRKDDLYLSSEQMKTCIHGDQVLAQPLGADRKGRREARIVRVLVPKTSQIVGRYFTEAGVGFVVPDDSRLSFDILIPPDQIMGARMGFVVVVELTQRPTRRTKAVGKIVEVLGDNMGTGMAVDIALRTHEIPYIWPQAVEQQVAGLKEEVPEEAKAGRVDLRDLPLVTIDGEDARDFDDAVYCEKKRGGGWRLWVAIADVSYYVRPPTPLDREARNRGTSVYFPSQVIPMLPEVLSNGLCSLNPQVDRLCMVCEMTVSSKGRLTGYKFYEAVMSSHARLTYTKVWHILQGDQDLREQYAPLVKHLEELHNLYKVLDKAREERGGISFESEEAKFIFNAERRIERIEQTQRNDAHKLIEECMILANISAARFVEKAKEPALFRIHDKPSTEAITSFRSVLAELGLELPGGNKPEPRDYAELLESVADRPDAEMLQTMLLRSMKQAIYDPENRGHFGLALQSYAHFTSPIRRYPDLTLHRAIKYLLAKEQGHQGNTTETGGYHYSMEEMLQLGQHCSMAERRADEATRDVADWLKCDFMLDQVGNVFKGVISSVTGFGFFVRLDDLFIDGLVHVSSLDNDYYRFDQVGQRLMGESSGQTYRLGDRVEVRVEAVNMDERKIDFSLISSERAPRNVGKTAREKAKKGDAGKKGGKRCQVGKKVNFEPDSAFRGEKKTKPKAAKKDARKAKKPSAKTQKIAAATKAKRAAKKKVAE</sequence>
<name>RNR_SHIFL</name>
<feature type="chain" id="PRO_0000166411" description="Ribonuclease R">
    <location>
        <begin position="1"/>
        <end position="813"/>
    </location>
</feature>
<feature type="domain" description="RNB" evidence="2">
    <location>
        <begin position="260"/>
        <end position="587"/>
    </location>
</feature>
<feature type="domain" description="S1 motif" evidence="3">
    <location>
        <begin position="644"/>
        <end position="725"/>
    </location>
</feature>
<feature type="region of interest" description="Disordered" evidence="4">
    <location>
        <begin position="733"/>
        <end position="813"/>
    </location>
</feature>
<feature type="compositionally biased region" description="Basic and acidic residues" evidence="4">
    <location>
        <begin position="737"/>
        <end position="749"/>
    </location>
</feature>
<feature type="compositionally biased region" description="Basic and acidic residues" evidence="4">
    <location>
        <begin position="761"/>
        <end position="774"/>
    </location>
</feature>
<feature type="compositionally biased region" description="Basic residues" evidence="4">
    <location>
        <begin position="775"/>
        <end position="791"/>
    </location>
</feature>
<feature type="compositionally biased region" description="Low complexity" evidence="4">
    <location>
        <begin position="792"/>
        <end position="801"/>
    </location>
</feature>
<feature type="compositionally biased region" description="Basic residues" evidence="4">
    <location>
        <begin position="802"/>
        <end position="813"/>
    </location>
</feature>
<feature type="modified residue" description="N6-acetyllysine" evidence="1">
    <location>
        <position position="544"/>
    </location>
</feature>
<feature type="sequence conflict" description="In Ref. 3; BAA01777." evidence="5" ref="3">
    <original>AE</original>
    <variation>GQ</variation>
    <location>
        <begin position="520"/>
        <end position="521"/>
    </location>
</feature>
<feature type="sequence conflict" description="In Ref. 3; BAA01777." evidence="5" ref="3">
    <original>D</original>
    <variation>E</variation>
    <location>
        <position position="624"/>
    </location>
</feature>
<feature type="sequence conflict" description="In Ref. 3; BAA01777." evidence="5" ref="3">
    <original>R</original>
    <variation>G</variation>
    <location>
        <position position="628"/>
    </location>
</feature>
<feature type="sequence conflict" description="In Ref. 3; BAA01777." evidence="5" ref="3">
    <original>R</original>
    <variation>A</variation>
    <location>
        <position position="718"/>
    </location>
</feature>
<accession>P30851</accession>
<dbReference type="EC" id="3.1.13.1" evidence="3"/>
<dbReference type="EMBL" id="AE005674">
    <property type="protein sequence ID" value="AAN45751.1"/>
    <property type="status" value="ALT_INIT"/>
    <property type="molecule type" value="Genomic_DNA"/>
</dbReference>
<dbReference type="EMBL" id="AE014073">
    <property type="protein sequence ID" value="AAP19534.1"/>
    <property type="status" value="ALT_INIT"/>
    <property type="molecule type" value="Genomic_DNA"/>
</dbReference>
<dbReference type="EMBL" id="D11024">
    <property type="protein sequence ID" value="BAA01777.1"/>
    <property type="status" value="ALT_FRAME"/>
    <property type="molecule type" value="Genomic_DNA"/>
</dbReference>
<dbReference type="RefSeq" id="NP_710044.3">
    <property type="nucleotide sequence ID" value="NC_004337.2"/>
</dbReference>
<dbReference type="RefSeq" id="WP_000076311.1">
    <property type="nucleotide sequence ID" value="NZ_WPGW01000048.1"/>
</dbReference>
<dbReference type="SMR" id="P30851"/>
<dbReference type="STRING" id="198214.SF4334"/>
<dbReference type="PaxDb" id="198214-SF4334"/>
<dbReference type="GeneID" id="1025395"/>
<dbReference type="KEGG" id="sfl:SF4334"/>
<dbReference type="KEGG" id="sfx:S4602"/>
<dbReference type="PATRIC" id="fig|198214.7.peg.5108"/>
<dbReference type="HOGENOM" id="CLU_002333_7_0_6"/>
<dbReference type="Proteomes" id="UP000001006">
    <property type="component" value="Chromosome"/>
</dbReference>
<dbReference type="Proteomes" id="UP000002673">
    <property type="component" value="Chromosome"/>
</dbReference>
<dbReference type="GO" id="GO:0005829">
    <property type="term" value="C:cytosol"/>
    <property type="evidence" value="ECO:0007669"/>
    <property type="project" value="UniProtKB-ARBA"/>
</dbReference>
<dbReference type="GO" id="GO:0008859">
    <property type="term" value="F:exoribonuclease II activity"/>
    <property type="evidence" value="ECO:0007669"/>
    <property type="project" value="UniProtKB-UniRule"/>
</dbReference>
<dbReference type="GO" id="GO:0003723">
    <property type="term" value="F:RNA binding"/>
    <property type="evidence" value="ECO:0007669"/>
    <property type="project" value="UniProtKB-UniRule"/>
</dbReference>
<dbReference type="GO" id="GO:0006402">
    <property type="term" value="P:mRNA catabolic process"/>
    <property type="evidence" value="ECO:0007669"/>
    <property type="project" value="TreeGrafter"/>
</dbReference>
<dbReference type="CDD" id="cd04471">
    <property type="entry name" value="S1_RNase_R"/>
    <property type="match status" value="1"/>
</dbReference>
<dbReference type="FunFam" id="2.40.50.140:FF:000124">
    <property type="entry name" value="Ribonuclease R"/>
    <property type="match status" value="1"/>
</dbReference>
<dbReference type="FunFam" id="2.40.50.140:FF:000161">
    <property type="entry name" value="Ribonuclease R"/>
    <property type="match status" value="1"/>
</dbReference>
<dbReference type="Gene3D" id="2.40.50.140">
    <property type="entry name" value="Nucleic acid-binding proteins"/>
    <property type="match status" value="3"/>
</dbReference>
<dbReference type="HAMAP" id="MF_01895">
    <property type="entry name" value="RNase_R"/>
    <property type="match status" value="1"/>
</dbReference>
<dbReference type="InterPro" id="IPR011129">
    <property type="entry name" value="CSD"/>
</dbReference>
<dbReference type="InterPro" id="IPR040476">
    <property type="entry name" value="CSD2"/>
</dbReference>
<dbReference type="InterPro" id="IPR012340">
    <property type="entry name" value="NA-bd_OB-fold"/>
</dbReference>
<dbReference type="InterPro" id="IPR013223">
    <property type="entry name" value="RNase_B_OB_dom"/>
</dbReference>
<dbReference type="InterPro" id="IPR001900">
    <property type="entry name" value="RNase_II/R"/>
</dbReference>
<dbReference type="InterPro" id="IPR022966">
    <property type="entry name" value="RNase_II/R_CS"/>
</dbReference>
<dbReference type="InterPro" id="IPR004476">
    <property type="entry name" value="RNase_II/RNase_R"/>
</dbReference>
<dbReference type="InterPro" id="IPR011805">
    <property type="entry name" value="RNase_R"/>
</dbReference>
<dbReference type="InterPro" id="IPR013668">
    <property type="entry name" value="RNase_R_HTH_12"/>
</dbReference>
<dbReference type="InterPro" id="IPR050180">
    <property type="entry name" value="RNR_Ribonuclease"/>
</dbReference>
<dbReference type="InterPro" id="IPR003029">
    <property type="entry name" value="S1_domain"/>
</dbReference>
<dbReference type="NCBIfam" id="TIGR00358">
    <property type="entry name" value="3_prime_RNase"/>
    <property type="match status" value="1"/>
</dbReference>
<dbReference type="NCBIfam" id="NF008648">
    <property type="entry name" value="PRK11642.1"/>
    <property type="match status" value="1"/>
</dbReference>
<dbReference type="NCBIfam" id="TIGR02063">
    <property type="entry name" value="RNase_R"/>
    <property type="match status" value="1"/>
</dbReference>
<dbReference type="PANTHER" id="PTHR23355:SF9">
    <property type="entry name" value="DIS3-LIKE EXONUCLEASE 2"/>
    <property type="match status" value="1"/>
</dbReference>
<dbReference type="PANTHER" id="PTHR23355">
    <property type="entry name" value="RIBONUCLEASE"/>
    <property type="match status" value="1"/>
</dbReference>
<dbReference type="Pfam" id="PF17876">
    <property type="entry name" value="CSD2"/>
    <property type="match status" value="1"/>
</dbReference>
<dbReference type="Pfam" id="PF08461">
    <property type="entry name" value="HTH_12"/>
    <property type="match status" value="1"/>
</dbReference>
<dbReference type="Pfam" id="PF08206">
    <property type="entry name" value="OB_RNB"/>
    <property type="match status" value="1"/>
</dbReference>
<dbReference type="Pfam" id="PF00773">
    <property type="entry name" value="RNB"/>
    <property type="match status" value="1"/>
</dbReference>
<dbReference type="Pfam" id="PF00575">
    <property type="entry name" value="S1"/>
    <property type="match status" value="1"/>
</dbReference>
<dbReference type="SMART" id="SM00357">
    <property type="entry name" value="CSP"/>
    <property type="match status" value="1"/>
</dbReference>
<dbReference type="SMART" id="SM00955">
    <property type="entry name" value="RNB"/>
    <property type="match status" value="1"/>
</dbReference>
<dbReference type="SMART" id="SM00316">
    <property type="entry name" value="S1"/>
    <property type="match status" value="1"/>
</dbReference>
<dbReference type="SUPFAM" id="SSF50249">
    <property type="entry name" value="Nucleic acid-binding proteins"/>
    <property type="match status" value="4"/>
</dbReference>
<dbReference type="PROSITE" id="PS01175">
    <property type="entry name" value="RIBONUCLEASE_II"/>
    <property type="match status" value="1"/>
</dbReference>
<dbReference type="PROSITE" id="PS50126">
    <property type="entry name" value="S1"/>
    <property type="match status" value="1"/>
</dbReference>
<keyword id="KW-0007">Acetylation</keyword>
<keyword id="KW-0963">Cytoplasm</keyword>
<keyword id="KW-0269">Exonuclease</keyword>
<keyword id="KW-0378">Hydrolase</keyword>
<keyword id="KW-0540">Nuclease</keyword>
<keyword id="KW-1185">Reference proteome</keyword>
<keyword id="KW-0694">RNA-binding</keyword>
<keyword id="KW-0843">Virulence</keyword>
<proteinExistence type="inferred from homology"/>
<organism>
    <name type="scientific">Shigella flexneri</name>
    <dbReference type="NCBI Taxonomy" id="623"/>
    <lineage>
        <taxon>Bacteria</taxon>
        <taxon>Pseudomonadati</taxon>
        <taxon>Pseudomonadota</taxon>
        <taxon>Gammaproteobacteria</taxon>
        <taxon>Enterobacterales</taxon>
        <taxon>Enterobacteriaceae</taxon>
        <taxon>Shigella</taxon>
    </lineage>
</organism>
<gene>
    <name evidence="3" type="primary">rnr</name>
    <name type="synonym">vacB</name>
    <name type="ordered locus">SF4334</name>
    <name type="ordered locus">S4602</name>
</gene>
<evidence type="ECO:0000250" key="1"/>
<evidence type="ECO:0000255" key="2"/>
<evidence type="ECO:0000255" key="3">
    <source>
        <dbReference type="HAMAP-Rule" id="MF_01895"/>
    </source>
</evidence>
<evidence type="ECO:0000256" key="4">
    <source>
        <dbReference type="SAM" id="MobiDB-lite"/>
    </source>
</evidence>
<evidence type="ECO:0000305" key="5"/>
<comment type="function">
    <text evidence="3">3'-5' exoribonuclease that releases 5'-nucleoside monophosphates and is involved in maturation of structured RNAs (By similarity). Required for the expression of virulence genes on the large plasmid of S.flexneri at the post-transcriptional level.</text>
</comment>
<comment type="catalytic activity">
    <reaction evidence="3">
        <text>Exonucleolytic cleavage in the 3'- to 5'-direction to yield nucleoside 5'-phosphates.</text>
        <dbReference type="EC" id="3.1.13.1"/>
    </reaction>
</comment>
<comment type="subunit">
    <text evidence="3">Monomer.</text>
</comment>
<comment type="subcellular location">
    <subcellularLocation>
        <location evidence="3">Cytoplasm</location>
    </subcellularLocation>
</comment>
<comment type="similarity">
    <text evidence="3">Belongs to the RNR ribonuclease family. RNase R subfamily.</text>
</comment>
<comment type="sequence caution" evidence="5">
    <conflict type="erroneous initiation">
        <sequence resource="EMBL-CDS" id="AAN45751"/>
    </conflict>
    <text>Extended N-terminus.</text>
</comment>
<comment type="sequence caution" evidence="5">
    <conflict type="erroneous initiation">
        <sequence resource="EMBL-CDS" id="AAP19534"/>
    </conflict>
    <text>Extended N-terminus.</text>
</comment>
<comment type="sequence caution" evidence="5">
    <conflict type="miscellaneous discrepancy">
        <sequence resource="EMBL-CDS" id="BAA01777"/>
    </conflict>
    <text>Several sequencing errors.</text>
</comment>
<protein>
    <recommendedName>
        <fullName evidence="3">Ribonuclease R</fullName>
        <shortName evidence="3">RNase R</shortName>
        <ecNumber evidence="3">3.1.13.1</ecNumber>
    </recommendedName>
    <alternativeName>
        <fullName>Protein VacB</fullName>
    </alternativeName>
</protein>